<reference key="1">
    <citation type="journal article" date="1991" name="Proc. Natl. Acad. Sci. U.S.A.">
        <title>Primary structure of a human arginine-rich nuclear protein that colocalizes with spliceosome components.</title>
        <authorList>
            <person name="Chaudhary N."/>
            <person name="McMahon C."/>
            <person name="Blobel G."/>
        </authorList>
    </citation>
    <scope>NUCLEOTIDE SEQUENCE [MRNA] (ISOFORM 1)</scope>
    <source>
        <tissue>Hepatoma</tissue>
    </source>
</reference>
<reference key="2">
    <citation type="journal article" date="2006" name="Nature">
        <title>The DNA sequence and biological annotation of human chromosome 1.</title>
        <authorList>
            <person name="Gregory S.G."/>
            <person name="Barlow K.F."/>
            <person name="McLay K.E."/>
            <person name="Kaul R."/>
            <person name="Swarbreck D."/>
            <person name="Dunham A."/>
            <person name="Scott C.E."/>
            <person name="Howe K.L."/>
            <person name="Woodfine K."/>
            <person name="Spencer C.C.A."/>
            <person name="Jones M.C."/>
            <person name="Gillson C."/>
            <person name="Searle S."/>
            <person name="Zhou Y."/>
            <person name="Kokocinski F."/>
            <person name="McDonald L."/>
            <person name="Evans R."/>
            <person name="Phillips K."/>
            <person name="Atkinson A."/>
            <person name="Cooper R."/>
            <person name="Jones C."/>
            <person name="Hall R.E."/>
            <person name="Andrews T.D."/>
            <person name="Lloyd C."/>
            <person name="Ainscough R."/>
            <person name="Almeida J.P."/>
            <person name="Ambrose K.D."/>
            <person name="Anderson F."/>
            <person name="Andrew R.W."/>
            <person name="Ashwell R.I.S."/>
            <person name="Aubin K."/>
            <person name="Babbage A.K."/>
            <person name="Bagguley C.L."/>
            <person name="Bailey J."/>
            <person name="Beasley H."/>
            <person name="Bethel G."/>
            <person name="Bird C.P."/>
            <person name="Bray-Allen S."/>
            <person name="Brown J.Y."/>
            <person name="Brown A.J."/>
            <person name="Buckley D."/>
            <person name="Burton J."/>
            <person name="Bye J."/>
            <person name="Carder C."/>
            <person name="Chapman J.C."/>
            <person name="Clark S.Y."/>
            <person name="Clarke G."/>
            <person name="Clee C."/>
            <person name="Cobley V."/>
            <person name="Collier R.E."/>
            <person name="Corby N."/>
            <person name="Coville G.J."/>
            <person name="Davies J."/>
            <person name="Deadman R."/>
            <person name="Dunn M."/>
            <person name="Earthrowl M."/>
            <person name="Ellington A.G."/>
            <person name="Errington H."/>
            <person name="Frankish A."/>
            <person name="Frankland J."/>
            <person name="French L."/>
            <person name="Garner P."/>
            <person name="Garnett J."/>
            <person name="Gay L."/>
            <person name="Ghori M.R.J."/>
            <person name="Gibson R."/>
            <person name="Gilby L.M."/>
            <person name="Gillett W."/>
            <person name="Glithero R.J."/>
            <person name="Grafham D.V."/>
            <person name="Griffiths C."/>
            <person name="Griffiths-Jones S."/>
            <person name="Grocock R."/>
            <person name="Hammond S."/>
            <person name="Harrison E.S.I."/>
            <person name="Hart E."/>
            <person name="Haugen E."/>
            <person name="Heath P.D."/>
            <person name="Holmes S."/>
            <person name="Holt K."/>
            <person name="Howden P.J."/>
            <person name="Hunt A.R."/>
            <person name="Hunt S.E."/>
            <person name="Hunter G."/>
            <person name="Isherwood J."/>
            <person name="James R."/>
            <person name="Johnson C."/>
            <person name="Johnson D."/>
            <person name="Joy A."/>
            <person name="Kay M."/>
            <person name="Kershaw J.K."/>
            <person name="Kibukawa M."/>
            <person name="Kimberley A.M."/>
            <person name="King A."/>
            <person name="Knights A.J."/>
            <person name="Lad H."/>
            <person name="Laird G."/>
            <person name="Lawlor S."/>
            <person name="Leongamornlert D.A."/>
            <person name="Lloyd D.M."/>
            <person name="Loveland J."/>
            <person name="Lovell J."/>
            <person name="Lush M.J."/>
            <person name="Lyne R."/>
            <person name="Martin S."/>
            <person name="Mashreghi-Mohammadi M."/>
            <person name="Matthews L."/>
            <person name="Matthews N.S.W."/>
            <person name="McLaren S."/>
            <person name="Milne S."/>
            <person name="Mistry S."/>
            <person name="Moore M.J.F."/>
            <person name="Nickerson T."/>
            <person name="O'Dell C.N."/>
            <person name="Oliver K."/>
            <person name="Palmeiri A."/>
            <person name="Palmer S.A."/>
            <person name="Parker A."/>
            <person name="Patel D."/>
            <person name="Pearce A.V."/>
            <person name="Peck A.I."/>
            <person name="Pelan S."/>
            <person name="Phelps K."/>
            <person name="Phillimore B.J."/>
            <person name="Plumb R."/>
            <person name="Rajan J."/>
            <person name="Raymond C."/>
            <person name="Rouse G."/>
            <person name="Saenphimmachak C."/>
            <person name="Sehra H.K."/>
            <person name="Sheridan E."/>
            <person name="Shownkeen R."/>
            <person name="Sims S."/>
            <person name="Skuce C.D."/>
            <person name="Smith M."/>
            <person name="Steward C."/>
            <person name="Subramanian S."/>
            <person name="Sycamore N."/>
            <person name="Tracey A."/>
            <person name="Tromans A."/>
            <person name="Van Helmond Z."/>
            <person name="Wall M."/>
            <person name="Wallis J.M."/>
            <person name="White S."/>
            <person name="Whitehead S.L."/>
            <person name="Wilkinson J.E."/>
            <person name="Willey D.L."/>
            <person name="Williams H."/>
            <person name="Wilming L."/>
            <person name="Wray P.W."/>
            <person name="Wu Z."/>
            <person name="Coulson A."/>
            <person name="Vaudin M."/>
            <person name="Sulston J.E."/>
            <person name="Durbin R.M."/>
            <person name="Hubbard T."/>
            <person name="Wooster R."/>
            <person name="Dunham I."/>
            <person name="Carter N.P."/>
            <person name="McVean G."/>
            <person name="Ross M.T."/>
            <person name="Harrow J."/>
            <person name="Olson M.V."/>
            <person name="Beck S."/>
            <person name="Rogers J."/>
            <person name="Bentley D.R."/>
        </authorList>
    </citation>
    <scope>NUCLEOTIDE SEQUENCE [LARGE SCALE GENOMIC DNA]</scope>
</reference>
<reference key="3">
    <citation type="submission" date="2005-09" db="EMBL/GenBank/DDBJ databases">
        <authorList>
            <person name="Mural R.J."/>
            <person name="Istrail S."/>
            <person name="Sutton G."/>
            <person name="Florea L."/>
            <person name="Halpern A.L."/>
            <person name="Mobarry C.M."/>
            <person name="Lippert R."/>
            <person name="Walenz B."/>
            <person name="Shatkay H."/>
            <person name="Dew I."/>
            <person name="Miller J.R."/>
            <person name="Flanigan M.J."/>
            <person name="Edwards N.J."/>
            <person name="Bolanos R."/>
            <person name="Fasulo D."/>
            <person name="Halldorsson B.V."/>
            <person name="Hannenhalli S."/>
            <person name="Turner R."/>
            <person name="Yooseph S."/>
            <person name="Lu F."/>
            <person name="Nusskern D.R."/>
            <person name="Shue B.C."/>
            <person name="Zheng X.H."/>
            <person name="Zhong F."/>
            <person name="Delcher A.L."/>
            <person name="Huson D.H."/>
            <person name="Kravitz S.A."/>
            <person name="Mouchard L."/>
            <person name="Reinert K."/>
            <person name="Remington K.A."/>
            <person name="Clark A.G."/>
            <person name="Waterman M.S."/>
            <person name="Eichler E.E."/>
            <person name="Adams M.D."/>
            <person name="Hunkapiller M.W."/>
            <person name="Myers E.W."/>
            <person name="Venter J.C."/>
        </authorList>
    </citation>
    <scope>NUCLEOTIDE SEQUENCE [LARGE SCALE GENOMIC DNA]</scope>
</reference>
<reference key="4">
    <citation type="journal article" date="2004" name="Genome Res.">
        <title>The status, quality, and expansion of the NIH full-length cDNA project: the Mammalian Gene Collection (MGC).</title>
        <authorList>
            <consortium name="The MGC Project Team"/>
        </authorList>
    </citation>
    <scope>NUCLEOTIDE SEQUENCE [LARGE SCALE MRNA] (ISOFORM 2)</scope>
    <source>
        <tissue>Uterus</tissue>
    </source>
</reference>
<reference key="5">
    <citation type="journal article" date="1999" name="RNA">
        <title>PUF60: a novel U2AF65-related splicing activity.</title>
        <authorList>
            <person name="Page-McCaw P.S."/>
            <person name="Amonlirdviman K."/>
            <person name="Sharp P.A."/>
        </authorList>
    </citation>
    <scope>INTERACTION WITH PUF60</scope>
</reference>
<reference key="6">
    <citation type="journal article" date="2006" name="Cell">
        <title>Global, in vivo, and site-specific phosphorylation dynamics in signaling networks.</title>
        <authorList>
            <person name="Olsen J.V."/>
            <person name="Blagoev B."/>
            <person name="Gnad F."/>
            <person name="Macek B."/>
            <person name="Kumar C."/>
            <person name="Mortensen P."/>
            <person name="Mann M."/>
        </authorList>
    </citation>
    <scope>PHOSPHORYLATION [LARGE SCALE ANALYSIS] AT SER-483</scope>
    <scope>IDENTIFICATION BY MASS SPECTROMETRY [LARGE SCALE ANALYSIS]</scope>
    <source>
        <tissue>Cervix carcinoma</tissue>
    </source>
</reference>
<reference key="7">
    <citation type="journal article" date="2007" name="J. Proteome Res.">
        <title>Improved titanium dioxide enrichment of phosphopeptides from HeLa cells and high confident phosphopeptide identification by cross-validation of MS/MS and MS/MS/MS spectra.</title>
        <authorList>
            <person name="Yu L.R."/>
            <person name="Zhu Z."/>
            <person name="Chan K.C."/>
            <person name="Issaq H.J."/>
            <person name="Dimitrov D.S."/>
            <person name="Veenstra T.D."/>
        </authorList>
    </citation>
    <scope>IDENTIFICATION BY MASS SPECTROMETRY [LARGE SCALE ANALYSIS]</scope>
    <source>
        <tissue>Cervix carcinoma</tissue>
    </source>
</reference>
<reference key="8">
    <citation type="journal article" date="2008" name="Proc. Natl. Acad. Sci. U.S.A.">
        <title>A quantitative atlas of mitotic phosphorylation.</title>
        <authorList>
            <person name="Dephoure N."/>
            <person name="Zhou C."/>
            <person name="Villen J."/>
            <person name="Beausoleil S.A."/>
            <person name="Bakalarski C.E."/>
            <person name="Elledge S.J."/>
            <person name="Gygi S.P."/>
        </authorList>
    </citation>
    <scope>PHOSPHORYLATION [LARGE SCALE ANALYSIS] AT SER-207 AND SER-434</scope>
    <scope>IDENTIFICATION BY MASS SPECTROMETRY [LARGE SCALE ANALYSIS]</scope>
    <source>
        <tissue>Cervix carcinoma</tissue>
    </source>
</reference>
<reference key="9">
    <citation type="journal article" date="2009" name="Anal. Chem.">
        <title>Lys-N and trypsin cover complementary parts of the phosphoproteome in a refined SCX-based approach.</title>
        <authorList>
            <person name="Gauci S."/>
            <person name="Helbig A.O."/>
            <person name="Slijper M."/>
            <person name="Krijgsveld J."/>
            <person name="Heck A.J."/>
            <person name="Mohammed S."/>
        </authorList>
    </citation>
    <scope>ACETYLATION [LARGE SCALE ANALYSIS] AT SER-2</scope>
    <scope>CLEAVAGE OF INITIATOR METHIONINE [LARGE SCALE ANALYSIS]</scope>
    <scope>IDENTIFICATION BY MASS SPECTROMETRY [LARGE SCALE ANALYSIS]</scope>
</reference>
<reference key="10">
    <citation type="journal article" date="2009" name="Sci. Signal.">
        <title>Quantitative phosphoproteomic analysis of T cell receptor signaling reveals system-wide modulation of protein-protein interactions.</title>
        <authorList>
            <person name="Mayya V."/>
            <person name="Lundgren D.H."/>
            <person name="Hwang S.-I."/>
            <person name="Rezaul K."/>
            <person name="Wu L."/>
            <person name="Eng J.K."/>
            <person name="Rodionov V."/>
            <person name="Han D.K."/>
        </authorList>
    </citation>
    <scope>PHOSPHORYLATION [LARGE SCALE ANALYSIS] AT SER-207 AND SER-483</scope>
    <scope>IDENTIFICATION BY MASS SPECTROMETRY [LARGE SCALE ANALYSIS]</scope>
    <source>
        <tissue>Leukemic T-cell</tissue>
    </source>
</reference>
<reference key="11">
    <citation type="journal article" date="2010" name="Sci. Signal.">
        <title>Quantitative phosphoproteomics reveals widespread full phosphorylation site occupancy during mitosis.</title>
        <authorList>
            <person name="Olsen J.V."/>
            <person name="Vermeulen M."/>
            <person name="Santamaria A."/>
            <person name="Kumar C."/>
            <person name="Miller M.L."/>
            <person name="Jensen L.J."/>
            <person name="Gnad F."/>
            <person name="Cox J."/>
            <person name="Jensen T.S."/>
            <person name="Nigg E.A."/>
            <person name="Brunak S."/>
            <person name="Mann M."/>
        </authorList>
    </citation>
    <scope>PHOSPHORYLATION [LARGE SCALE ANALYSIS] AT SER-207; SER-414; SER-434; THR-447; SER-449; SER-464 AND SER-483</scope>
    <scope>IDENTIFICATION BY MASS SPECTROMETRY [LARGE SCALE ANALYSIS]</scope>
    <source>
        <tissue>Cervix carcinoma</tissue>
    </source>
</reference>
<reference key="12">
    <citation type="journal article" date="2011" name="BMC Syst. Biol.">
        <title>Initial characterization of the human central proteome.</title>
        <authorList>
            <person name="Burkard T.R."/>
            <person name="Planyavsky M."/>
            <person name="Kaupe I."/>
            <person name="Breitwieser F.P."/>
            <person name="Buerckstuemmer T."/>
            <person name="Bennett K.L."/>
            <person name="Superti-Furga G."/>
            <person name="Colinge J."/>
        </authorList>
    </citation>
    <scope>IDENTIFICATION BY MASS SPECTROMETRY [LARGE SCALE ANALYSIS]</scope>
</reference>
<reference key="13">
    <citation type="journal article" date="2011" name="Sci. Signal.">
        <title>System-wide temporal characterization of the proteome and phosphoproteome of human embryonic stem cell differentiation.</title>
        <authorList>
            <person name="Rigbolt K.T."/>
            <person name="Prokhorova T.A."/>
            <person name="Akimov V."/>
            <person name="Henningsen J."/>
            <person name="Johansen P.T."/>
            <person name="Kratchmarova I."/>
            <person name="Kassem M."/>
            <person name="Mann M."/>
            <person name="Olsen J.V."/>
            <person name="Blagoev B."/>
        </authorList>
    </citation>
    <scope>PHOSPHORYLATION [LARGE SCALE ANALYSIS] AT SER-207; SER-434; THR-447; SER-449 AND SER-483</scope>
    <scope>IDENTIFICATION BY MASS SPECTROMETRY [LARGE SCALE ANALYSIS]</scope>
</reference>
<reference key="14">
    <citation type="journal article" date="2012" name="Proc. Natl. Acad. Sci. U.S.A.">
        <title>N-terminal acetylome analyses and functional insights of the N-terminal acetyltransferase NatB.</title>
        <authorList>
            <person name="Van Damme P."/>
            <person name="Lasa M."/>
            <person name="Polevoda B."/>
            <person name="Gazquez C."/>
            <person name="Elosegui-Artola A."/>
            <person name="Kim D.S."/>
            <person name="De Juan-Pardo E."/>
            <person name="Demeyer K."/>
            <person name="Hole K."/>
            <person name="Larrea E."/>
            <person name="Timmerman E."/>
            <person name="Prieto J."/>
            <person name="Arnesen T."/>
            <person name="Sherman F."/>
            <person name="Gevaert K."/>
            <person name="Aldabe R."/>
        </authorList>
    </citation>
    <scope>ACETYLATION [LARGE SCALE ANALYSIS] AT SER-2</scope>
    <scope>CLEAVAGE OF INITIATOR METHIONINE [LARGE SCALE ANALYSIS]</scope>
    <scope>IDENTIFICATION BY MASS SPECTROMETRY [LARGE SCALE ANALYSIS]</scope>
</reference>
<reference key="15">
    <citation type="journal article" date="2013" name="J. Proteome Res.">
        <title>Toward a comprehensive characterization of a human cancer cell phosphoproteome.</title>
        <authorList>
            <person name="Zhou H."/>
            <person name="Di Palma S."/>
            <person name="Preisinger C."/>
            <person name="Peng M."/>
            <person name="Polat A.N."/>
            <person name="Heck A.J."/>
            <person name="Mohammed S."/>
        </authorList>
    </citation>
    <scope>PHOSPHORYLATION [LARGE SCALE ANALYSIS] AT SER-207; SER-212; SER-323; THR-325; SER-434; SER-456 AND SER-483</scope>
    <scope>IDENTIFICATION BY MASS SPECTROMETRY [LARGE SCALE ANALYSIS]</scope>
    <source>
        <tissue>Cervix carcinoma</tissue>
        <tissue>Erythroleukemia</tissue>
    </source>
</reference>
<reference key="16">
    <citation type="journal article" date="2014" name="J. Proteomics">
        <title>An enzyme assisted RP-RPLC approach for in-depth analysis of human liver phosphoproteome.</title>
        <authorList>
            <person name="Bian Y."/>
            <person name="Song C."/>
            <person name="Cheng K."/>
            <person name="Dong M."/>
            <person name="Wang F."/>
            <person name="Huang J."/>
            <person name="Sun D."/>
            <person name="Wang L."/>
            <person name="Ye M."/>
            <person name="Zou H."/>
        </authorList>
    </citation>
    <scope>PHOSPHORYLATION [LARGE SCALE ANALYSIS] AT SER-207; SER-434 AND SER-449</scope>
    <scope>IDENTIFICATION BY MASS SPECTROMETRY [LARGE SCALE ANALYSIS]</scope>
    <source>
        <tissue>Liver</tissue>
    </source>
</reference>
<reference key="17">
    <citation type="journal article" date="2017" name="Nat. Struct. Mol. Biol.">
        <title>Site-specific mapping of the human SUMO proteome reveals co-modification with phosphorylation.</title>
        <authorList>
            <person name="Hendriks I.A."/>
            <person name="Lyon D."/>
            <person name="Young C."/>
            <person name="Jensen L.J."/>
            <person name="Vertegaal A.C."/>
            <person name="Nielsen M.L."/>
        </authorList>
    </citation>
    <scope>SUMOYLATION [LARGE SCALE ANALYSIS] AT LYS-197 AND LYS-211</scope>
    <scope>IDENTIFICATION BY MASS SPECTROMETRY [LARGE SCALE ANALYSIS]</scope>
</reference>
<organism>
    <name type="scientific">Homo sapiens</name>
    <name type="common">Human</name>
    <dbReference type="NCBI Taxonomy" id="9606"/>
    <lineage>
        <taxon>Eukaryota</taxon>
        <taxon>Metazoa</taxon>
        <taxon>Chordata</taxon>
        <taxon>Craniata</taxon>
        <taxon>Vertebrata</taxon>
        <taxon>Euteleostomi</taxon>
        <taxon>Mammalia</taxon>
        <taxon>Eutheria</taxon>
        <taxon>Euarchontoglires</taxon>
        <taxon>Primates</taxon>
        <taxon>Haplorrhini</taxon>
        <taxon>Catarrhini</taxon>
        <taxon>Hominidae</taxon>
        <taxon>Homo</taxon>
    </lineage>
</organism>
<gene>
    <name type="primary">SRSF11</name>
    <name type="synonym">SFRS11</name>
</gene>
<evidence type="ECO:0000255" key="1">
    <source>
        <dbReference type="PROSITE-ProRule" id="PRU00176"/>
    </source>
</evidence>
<evidence type="ECO:0000256" key="2">
    <source>
        <dbReference type="SAM" id="MobiDB-lite"/>
    </source>
</evidence>
<evidence type="ECO:0000269" key="3">
    <source>
    </source>
</evidence>
<evidence type="ECO:0000303" key="4">
    <source>
    </source>
</evidence>
<evidence type="ECO:0000305" key="5"/>
<evidence type="ECO:0007744" key="6">
    <source>
    </source>
</evidence>
<evidence type="ECO:0007744" key="7">
    <source>
    </source>
</evidence>
<evidence type="ECO:0007744" key="8">
    <source>
    </source>
</evidence>
<evidence type="ECO:0007744" key="9">
    <source>
    </source>
</evidence>
<evidence type="ECO:0007744" key="10">
    <source>
    </source>
</evidence>
<evidence type="ECO:0007744" key="11">
    <source>
    </source>
</evidence>
<evidence type="ECO:0007744" key="12">
    <source>
    </source>
</evidence>
<evidence type="ECO:0007744" key="13">
    <source>
    </source>
</evidence>
<evidence type="ECO:0007744" key="14">
    <source>
    </source>
</evidence>
<evidence type="ECO:0007744" key="15">
    <source>
    </source>
</evidence>
<proteinExistence type="evidence at protein level"/>
<accession>Q05519</accession>
<accession>Q5T758</accession>
<accession>Q8IWE6</accession>
<keyword id="KW-0007">Acetylation</keyword>
<keyword id="KW-0025">Alternative splicing</keyword>
<keyword id="KW-1017">Isopeptide bond</keyword>
<keyword id="KW-0507">mRNA processing</keyword>
<keyword id="KW-0508">mRNA splicing</keyword>
<keyword id="KW-0539">Nucleus</keyword>
<keyword id="KW-0597">Phosphoprotein</keyword>
<keyword id="KW-1267">Proteomics identification</keyword>
<keyword id="KW-1185">Reference proteome</keyword>
<keyword id="KW-0677">Repeat</keyword>
<keyword id="KW-0694">RNA-binding</keyword>
<keyword id="KW-0832">Ubl conjugation</keyword>
<dbReference type="EMBL" id="M74002">
    <property type="protein sequence ID" value="AAA35554.1"/>
    <property type="molecule type" value="mRNA"/>
</dbReference>
<dbReference type="EMBL" id="AL353771">
    <property type="status" value="NOT_ANNOTATED_CDS"/>
    <property type="molecule type" value="Genomic_DNA"/>
</dbReference>
<dbReference type="EMBL" id="CH471059">
    <property type="protein sequence ID" value="EAX06459.1"/>
    <property type="molecule type" value="Genomic_DNA"/>
</dbReference>
<dbReference type="EMBL" id="BC040436">
    <property type="protein sequence ID" value="AAH40436.1"/>
    <property type="molecule type" value="mRNA"/>
</dbReference>
<dbReference type="CCDS" id="CCDS53332.1">
    <molecule id="Q05519-2"/>
</dbReference>
<dbReference type="CCDS" id="CCDS647.1">
    <molecule id="Q05519-1"/>
</dbReference>
<dbReference type="PIR" id="A40988">
    <property type="entry name" value="A40988"/>
</dbReference>
<dbReference type="RefSeq" id="NP_001177916.1">
    <molecule id="Q05519-2"/>
    <property type="nucleotide sequence ID" value="NM_001190987.3"/>
</dbReference>
<dbReference type="RefSeq" id="NP_001337534.1">
    <molecule id="Q05519-1"/>
    <property type="nucleotide sequence ID" value="NM_001350605.2"/>
</dbReference>
<dbReference type="RefSeq" id="NP_001337535.1">
    <molecule id="Q05519-1"/>
    <property type="nucleotide sequence ID" value="NM_001350606.2"/>
</dbReference>
<dbReference type="RefSeq" id="NP_001337536.1">
    <molecule id="Q05519-2"/>
    <property type="nucleotide sequence ID" value="NM_001350607.2"/>
</dbReference>
<dbReference type="RefSeq" id="NP_001381335.1">
    <molecule id="Q05519-1"/>
    <property type="nucleotide sequence ID" value="NM_001394406.1"/>
</dbReference>
<dbReference type="RefSeq" id="NP_001381336.1">
    <molecule id="Q05519-2"/>
    <property type="nucleotide sequence ID" value="NM_001394407.1"/>
</dbReference>
<dbReference type="RefSeq" id="NP_001381337.1">
    <molecule id="Q05519-2"/>
    <property type="nucleotide sequence ID" value="NM_001394408.1"/>
</dbReference>
<dbReference type="RefSeq" id="NP_004759.1">
    <molecule id="Q05519-1"/>
    <property type="nucleotide sequence ID" value="NM_004768.5"/>
</dbReference>
<dbReference type="RefSeq" id="XP_011540729.1">
    <property type="nucleotide sequence ID" value="XM_011542427.2"/>
</dbReference>
<dbReference type="RefSeq" id="XP_016858301.1">
    <property type="nucleotide sequence ID" value="XM_017002812.1"/>
</dbReference>
<dbReference type="RefSeq" id="XP_016858302.1">
    <property type="nucleotide sequence ID" value="XM_017002813.1"/>
</dbReference>
<dbReference type="RefSeq" id="XP_047290479.1">
    <molecule id="Q05519-1"/>
    <property type="nucleotide sequence ID" value="XM_047434523.1"/>
</dbReference>
<dbReference type="RefSeq" id="XP_047290480.1">
    <molecule id="Q05519-2"/>
    <property type="nucleotide sequence ID" value="XM_047434524.1"/>
</dbReference>
<dbReference type="RefSeq" id="XP_054195614.1">
    <molecule id="Q05519-1"/>
    <property type="nucleotide sequence ID" value="XM_054339639.1"/>
</dbReference>
<dbReference type="RefSeq" id="XP_054195615.1">
    <molecule id="Q05519-2"/>
    <property type="nucleotide sequence ID" value="XM_054339640.1"/>
</dbReference>
<dbReference type="SMR" id="Q05519"/>
<dbReference type="BioGRID" id="114709">
    <property type="interactions" value="236"/>
</dbReference>
<dbReference type="CORUM" id="Q05519"/>
<dbReference type="FunCoup" id="Q05519">
    <property type="interactions" value="4326"/>
</dbReference>
<dbReference type="IntAct" id="Q05519">
    <property type="interactions" value="90"/>
</dbReference>
<dbReference type="MINT" id="Q05519"/>
<dbReference type="STRING" id="9606.ENSP00000359988"/>
<dbReference type="GlyGen" id="Q05519">
    <property type="glycosylation" value="5 sites, 1 O-linked glycan (5 sites)"/>
</dbReference>
<dbReference type="iPTMnet" id="Q05519"/>
<dbReference type="PhosphoSitePlus" id="Q05519"/>
<dbReference type="SwissPalm" id="Q05519"/>
<dbReference type="BioMuta" id="SRSF11"/>
<dbReference type="DMDM" id="8134672"/>
<dbReference type="jPOST" id="Q05519"/>
<dbReference type="MassIVE" id="Q05519"/>
<dbReference type="PaxDb" id="9606-ENSP00000359988"/>
<dbReference type="PeptideAtlas" id="Q05519"/>
<dbReference type="ProteomicsDB" id="58334">
    <molecule id="Q05519-1"/>
</dbReference>
<dbReference type="ProteomicsDB" id="58335">
    <molecule id="Q05519-2"/>
</dbReference>
<dbReference type="Pumba" id="Q05519"/>
<dbReference type="Antibodypedia" id="1615">
    <property type="antibodies" value="141 antibodies from 23 providers"/>
</dbReference>
<dbReference type="DNASU" id="9295"/>
<dbReference type="Ensembl" id="ENST00000370949.2">
    <molecule id="Q05519-1"/>
    <property type="protein sequence ID" value="ENSP00000359987.2"/>
    <property type="gene ID" value="ENSG00000116754.14"/>
</dbReference>
<dbReference type="Ensembl" id="ENST00000370950.7">
    <molecule id="Q05519-1"/>
    <property type="protein sequence ID" value="ENSP00000359988.3"/>
    <property type="gene ID" value="ENSG00000116754.14"/>
</dbReference>
<dbReference type="Ensembl" id="ENST00000370951.5">
    <molecule id="Q05519-2"/>
    <property type="protein sequence ID" value="ENSP00000359989.1"/>
    <property type="gene ID" value="ENSG00000116754.14"/>
</dbReference>
<dbReference type="GeneID" id="9295"/>
<dbReference type="KEGG" id="hsa:9295"/>
<dbReference type="MANE-Select" id="ENST00000370949.2">
    <property type="protein sequence ID" value="ENSP00000359987.2"/>
    <property type="RefSeq nucleotide sequence ID" value="NM_001350605.2"/>
    <property type="RefSeq protein sequence ID" value="NP_001337534.1"/>
</dbReference>
<dbReference type="UCSC" id="uc001des.4">
    <molecule id="Q05519-1"/>
    <property type="organism name" value="human"/>
</dbReference>
<dbReference type="AGR" id="HGNC:10782"/>
<dbReference type="CTD" id="9295"/>
<dbReference type="DisGeNET" id="9295"/>
<dbReference type="GeneCards" id="SRSF11"/>
<dbReference type="HGNC" id="HGNC:10782">
    <property type="gene designation" value="SRSF11"/>
</dbReference>
<dbReference type="HPA" id="ENSG00000116754">
    <property type="expression patterns" value="Low tissue specificity"/>
</dbReference>
<dbReference type="MIM" id="602010">
    <property type="type" value="gene"/>
</dbReference>
<dbReference type="neXtProt" id="NX_Q05519"/>
<dbReference type="OpenTargets" id="ENSG00000116754"/>
<dbReference type="PharmGKB" id="PA35698"/>
<dbReference type="VEuPathDB" id="HostDB:ENSG00000116754"/>
<dbReference type="eggNOG" id="KOG4676">
    <property type="taxonomic scope" value="Eukaryota"/>
</dbReference>
<dbReference type="GeneTree" id="ENSGT00730000110872"/>
<dbReference type="InParanoid" id="Q05519"/>
<dbReference type="OrthoDB" id="7763451at2759"/>
<dbReference type="PAN-GO" id="Q05519">
    <property type="GO annotations" value="2 GO annotations based on evolutionary models"/>
</dbReference>
<dbReference type="PhylomeDB" id="Q05519"/>
<dbReference type="TreeFam" id="TF106266"/>
<dbReference type="PathwayCommons" id="Q05519"/>
<dbReference type="Reactome" id="R-HSA-159236">
    <property type="pathway name" value="Transport of Mature mRNA derived from an Intron-Containing Transcript"/>
</dbReference>
<dbReference type="Reactome" id="R-HSA-72163">
    <property type="pathway name" value="mRNA Splicing - Major Pathway"/>
</dbReference>
<dbReference type="Reactome" id="R-HSA-72187">
    <property type="pathway name" value="mRNA 3'-end processing"/>
</dbReference>
<dbReference type="Reactome" id="R-HSA-72203">
    <property type="pathway name" value="Processing of Capped Intron-Containing Pre-mRNA"/>
</dbReference>
<dbReference type="Reactome" id="R-HSA-73856">
    <property type="pathway name" value="RNA Polymerase II Transcription Termination"/>
</dbReference>
<dbReference type="SignaLink" id="Q05519"/>
<dbReference type="SIGNOR" id="Q05519"/>
<dbReference type="BioGRID-ORCS" id="9295">
    <property type="hits" value="717 hits in 1169 CRISPR screens"/>
</dbReference>
<dbReference type="CD-CODE" id="1A18FFC4">
    <property type="entry name" value="Paraspeckle"/>
</dbReference>
<dbReference type="CD-CODE" id="804901D1">
    <property type="entry name" value="Nuclear speckle"/>
</dbReference>
<dbReference type="ChiTaRS" id="SRSF11">
    <property type="organism name" value="human"/>
</dbReference>
<dbReference type="GeneWiki" id="SFRS11"/>
<dbReference type="GenomeRNAi" id="9295"/>
<dbReference type="Pharos" id="Q05519">
    <property type="development level" value="Tbio"/>
</dbReference>
<dbReference type="PRO" id="PR:Q05519"/>
<dbReference type="Proteomes" id="UP000005640">
    <property type="component" value="Chromosome 1"/>
</dbReference>
<dbReference type="RNAct" id="Q05519">
    <property type="molecule type" value="protein"/>
</dbReference>
<dbReference type="Bgee" id="ENSG00000116754">
    <property type="expression patterns" value="Expressed in visceral pleura and 206 other cell types or tissues"/>
</dbReference>
<dbReference type="ExpressionAtlas" id="Q05519">
    <property type="expression patterns" value="baseline and differential"/>
</dbReference>
<dbReference type="GO" id="GO:0016607">
    <property type="term" value="C:nuclear speck"/>
    <property type="evidence" value="ECO:0000314"/>
    <property type="project" value="HPA"/>
</dbReference>
<dbReference type="GO" id="GO:0005654">
    <property type="term" value="C:nucleoplasm"/>
    <property type="evidence" value="ECO:0000318"/>
    <property type="project" value="GO_Central"/>
</dbReference>
<dbReference type="GO" id="GO:0005634">
    <property type="term" value="C:nucleus"/>
    <property type="evidence" value="ECO:0000304"/>
    <property type="project" value="ProtInc"/>
</dbReference>
<dbReference type="GO" id="GO:0042802">
    <property type="term" value="F:identical protein binding"/>
    <property type="evidence" value="ECO:0000353"/>
    <property type="project" value="IntAct"/>
</dbReference>
<dbReference type="GO" id="GO:0003723">
    <property type="term" value="F:RNA binding"/>
    <property type="evidence" value="ECO:0007005"/>
    <property type="project" value="UniProtKB"/>
</dbReference>
<dbReference type="GO" id="GO:0006397">
    <property type="term" value="P:mRNA processing"/>
    <property type="evidence" value="ECO:0000304"/>
    <property type="project" value="ProtInc"/>
</dbReference>
<dbReference type="GO" id="GO:0008380">
    <property type="term" value="P:RNA splicing"/>
    <property type="evidence" value="ECO:0000304"/>
    <property type="project" value="ProtInc"/>
</dbReference>
<dbReference type="CDD" id="cd12518">
    <property type="entry name" value="RRM_SRSF11"/>
    <property type="match status" value="1"/>
</dbReference>
<dbReference type="FunFam" id="3.30.70.330:FF:000084">
    <property type="entry name" value="Serine/arginine-rich splicing factor 11 isoform 1"/>
    <property type="match status" value="1"/>
</dbReference>
<dbReference type="Gene3D" id="3.30.70.330">
    <property type="match status" value="1"/>
</dbReference>
<dbReference type="InterPro" id="IPR012677">
    <property type="entry name" value="Nucleotide-bd_a/b_plait_sf"/>
</dbReference>
<dbReference type="InterPro" id="IPR035979">
    <property type="entry name" value="RBD_domain_sf"/>
</dbReference>
<dbReference type="InterPro" id="IPR000504">
    <property type="entry name" value="RRM_dom"/>
</dbReference>
<dbReference type="InterPro" id="IPR034447">
    <property type="entry name" value="RRM_SRSF11"/>
</dbReference>
<dbReference type="PANTHER" id="PTHR32343">
    <property type="entry name" value="SERINE/ARGININE-RICH SPLICING FACTOR"/>
    <property type="match status" value="1"/>
</dbReference>
<dbReference type="PANTHER" id="PTHR32343:SF6">
    <property type="entry name" value="SERINE_ARGININE-RICH SPLICING FACTOR 11"/>
    <property type="match status" value="1"/>
</dbReference>
<dbReference type="Pfam" id="PF00076">
    <property type="entry name" value="RRM_1"/>
    <property type="match status" value="1"/>
</dbReference>
<dbReference type="SMART" id="SM00360">
    <property type="entry name" value="RRM"/>
    <property type="match status" value="1"/>
</dbReference>
<dbReference type="SUPFAM" id="SSF54928">
    <property type="entry name" value="RNA-binding domain, RBD"/>
    <property type="match status" value="1"/>
</dbReference>
<dbReference type="PROSITE" id="PS50102">
    <property type="entry name" value="RRM"/>
    <property type="match status" value="1"/>
</dbReference>
<name>SRS11_HUMAN</name>
<protein>
    <recommendedName>
        <fullName>Serine/arginine-rich splicing factor 11</fullName>
    </recommendedName>
    <alternativeName>
        <fullName>Arginine-rich 54 kDa nuclear protein</fullName>
        <shortName>p54</shortName>
    </alternativeName>
    <alternativeName>
        <fullName>Splicing factor, arginine/serine-rich 11</fullName>
    </alternativeName>
</protein>
<comment type="function">
    <text>May function in pre-mRNA splicing.</text>
</comment>
<comment type="subunit">
    <text evidence="3">Interacts with PUF60.</text>
</comment>
<comment type="interaction">
    <interactant intactId="EBI-1051785">
        <id>Q05519</id>
    </interactant>
    <interactant intactId="EBI-10248982">
        <id>Q66PJ3-3</id>
        <label>ARL6IP4</label>
    </interactant>
    <organismsDiffer>false</organismsDiffer>
    <experiments>3</experiments>
</comment>
<comment type="interaction">
    <interactant intactId="EBI-1051785">
        <id>Q05519</id>
    </interactant>
    <interactant intactId="EBI-5280499">
        <id>Q66PJ3-4</id>
        <label>ARL6IP4</label>
    </interactant>
    <organismsDiffer>false</organismsDiffer>
    <experiments>3</experiments>
</comment>
<comment type="interaction">
    <interactant intactId="EBI-1051785">
        <id>Q05519</id>
    </interactant>
    <interactant intactId="EBI-913209">
        <id>P14921</id>
        <label>ETS1</label>
    </interactant>
    <organismsDiffer>false</organismsDiffer>
    <experiments>2</experiments>
</comment>
<comment type="interaction">
    <interactant intactId="EBI-1051785">
        <id>Q05519</id>
    </interactant>
    <interactant intactId="EBI-6929453">
        <id>O43716</id>
        <label>GATC</label>
    </interactant>
    <organismsDiffer>false</organismsDiffer>
    <experiments>3</experiments>
</comment>
<comment type="interaction">
    <interactant intactId="EBI-1051785">
        <id>Q05519</id>
    </interactant>
    <interactant intactId="EBI-749235">
        <id>Q5T013</id>
        <label>HYI</label>
    </interactant>
    <organismsDiffer>false</organismsDiffer>
    <experiments>3</experiments>
</comment>
<comment type="interaction">
    <interactant intactId="EBI-1051785">
        <id>Q05519</id>
    </interactant>
    <interactant intactId="EBI-1053259">
        <id>Q9UHX1</id>
        <label>PUF60</label>
    </interactant>
    <organismsDiffer>false</organismsDiffer>
    <experiments>8</experiments>
</comment>
<comment type="interaction">
    <interactant intactId="EBI-1051785">
        <id>Q05519</id>
    </interactant>
    <interactant intactId="EBI-395290">
        <id>Q14498</id>
        <label>RBM39</label>
    </interactant>
    <organismsDiffer>false</organismsDiffer>
    <experiments>3</experiments>
</comment>
<comment type="interaction">
    <interactant intactId="EBI-1051785">
        <id>Q05519</id>
    </interactant>
    <interactant intactId="EBI-6654703">
        <id>Q14498-3</id>
        <label>RBM39</label>
    </interactant>
    <organismsDiffer>false</organismsDiffer>
    <experiments>3</experiments>
</comment>
<comment type="interaction">
    <interactant intactId="EBI-1051785">
        <id>Q05519</id>
    </interactant>
    <interactant intactId="EBI-727004">
        <id>O00560</id>
        <label>SDCBP</label>
    </interactant>
    <organismsDiffer>false</organismsDiffer>
    <experiments>3</experiments>
</comment>
<comment type="interaction">
    <interactant intactId="EBI-1051785">
        <id>Q05519</id>
    </interactant>
    <interactant intactId="EBI-1044237">
        <id>Q8WXA9</id>
        <label>SREK1</label>
    </interactant>
    <organismsDiffer>false</organismsDiffer>
    <experiments>3</experiments>
</comment>
<comment type="interaction">
    <interactant intactId="EBI-1051785">
        <id>Q05519</id>
    </interactant>
    <interactant intactId="EBI-356349">
        <id>Q92844</id>
        <label>TANK</label>
    </interactant>
    <organismsDiffer>false</organismsDiffer>
    <experiments>3</experiments>
</comment>
<comment type="interaction">
    <interactant intactId="EBI-1051785">
        <id>Q05519</id>
    </interactant>
    <interactant intactId="EBI-10177989">
        <id>G4XUV3</id>
    </interactant>
    <organismsDiffer>false</organismsDiffer>
    <experiments>3</experiments>
</comment>
<comment type="interaction">
    <interactant intactId="EBI-11975029">
        <id>Q05519-2</id>
    </interactant>
    <interactant intactId="EBI-1049505">
        <id>P30049</id>
        <label>ATP5F1D</label>
    </interactant>
    <organismsDiffer>false</organismsDiffer>
    <experiments>3</experiments>
</comment>
<comment type="interaction">
    <interactant intactId="EBI-11975029">
        <id>Q05519-2</id>
    </interactant>
    <interactant intactId="EBI-10186082">
        <id>Q9UI36-2</id>
        <label>DACH1</label>
    </interactant>
    <organismsDiffer>false</organismsDiffer>
    <experiments>3</experiments>
</comment>
<comment type="interaction">
    <interactant intactId="EBI-11975029">
        <id>Q05519-2</id>
    </interactant>
    <interactant intactId="EBI-1054321">
        <id>Q68J44</id>
        <label>DUSP29</label>
    </interactant>
    <organismsDiffer>false</organismsDiffer>
    <experiments>3</experiments>
</comment>
<comment type="interaction">
    <interactant intactId="EBI-11975029">
        <id>Q05519-2</id>
    </interactant>
    <interactant intactId="EBI-6929453">
        <id>O43716</id>
        <label>GATC</label>
    </interactant>
    <organismsDiffer>false</organismsDiffer>
    <experiments>6</experiments>
</comment>
<comment type="interaction">
    <interactant intactId="EBI-11975029">
        <id>Q05519-2</id>
    </interactant>
    <interactant intactId="EBI-16439278">
        <id>Q6FHY5</id>
        <label>MEOX2</label>
    </interactant>
    <organismsDiffer>false</organismsDiffer>
    <experiments>3</experiments>
</comment>
<comment type="interaction">
    <interactant intactId="EBI-11975029">
        <id>Q05519-2</id>
    </interactant>
    <interactant intactId="EBI-747278">
        <id>P26367</id>
        <label>PAX6</label>
    </interactant>
    <organismsDiffer>false</organismsDiffer>
    <experiments>3</experiments>
</comment>
<comment type="interaction">
    <interactant intactId="EBI-11975029">
        <id>Q05519-2</id>
    </interactant>
    <interactant intactId="EBI-11529177">
        <id>Q9UHX1-2</id>
        <label>PUF60</label>
    </interactant>
    <organismsDiffer>false</organismsDiffer>
    <experiments>6</experiments>
</comment>
<comment type="interaction">
    <interactant intactId="EBI-11975029">
        <id>Q05519-2</id>
    </interactant>
    <interactant intactId="EBI-395290">
        <id>Q14498</id>
        <label>RBM39</label>
    </interactant>
    <organismsDiffer>false</organismsDiffer>
    <experiments>5</experiments>
</comment>
<comment type="interaction">
    <interactant intactId="EBI-11975029">
        <id>Q05519-2</id>
    </interactant>
    <interactant intactId="EBI-727004">
        <id>O00560</id>
        <label>SDCBP</label>
    </interactant>
    <organismsDiffer>false</organismsDiffer>
    <experiments>3</experiments>
</comment>
<comment type="interaction">
    <interactant intactId="EBI-11975029">
        <id>Q05519-2</id>
    </interactant>
    <interactant intactId="EBI-1044237">
        <id>Q8WXA9</id>
        <label>SREK1</label>
    </interactant>
    <organismsDiffer>false</organismsDiffer>
    <experiments>6</experiments>
</comment>
<comment type="interaction">
    <interactant intactId="EBI-11975029">
        <id>Q05519-2</id>
    </interactant>
    <interactant intactId="EBI-593303">
        <id>P78362</id>
        <label>SRPK2</label>
    </interactant>
    <organismsDiffer>false</organismsDiffer>
    <experiments>3</experiments>
</comment>
<comment type="interaction">
    <interactant intactId="EBI-11975029">
        <id>Q05519-2</id>
    </interactant>
    <interactant intactId="EBI-3867173">
        <id>A7MD48</id>
        <label>SRRM4</label>
    </interactant>
    <organismsDiffer>false</organismsDiffer>
    <experiments>3</experiments>
</comment>
<comment type="interaction">
    <interactant intactId="EBI-11975029">
        <id>Q05519-2</id>
    </interactant>
    <interactant intactId="EBI-11975029">
        <id>Q05519-2</id>
        <label>SRSF11</label>
    </interactant>
    <organismsDiffer>false</organismsDiffer>
    <experiments>3</experiments>
</comment>
<comment type="interaction">
    <interactant intactId="EBI-11975029">
        <id>Q05519-2</id>
    </interactant>
    <interactant intactId="EBI-12055653">
        <id>Q66K41-2</id>
        <label>ZNF385C</label>
    </interactant>
    <organismsDiffer>false</organismsDiffer>
    <experiments>3</experiments>
</comment>
<comment type="interaction">
    <interactant intactId="EBI-11975029">
        <id>Q05519-2</id>
    </interactant>
    <interactant intactId="EBI-10177989">
        <id>G4XUV3</id>
    </interactant>
    <organismsDiffer>false</organismsDiffer>
    <experiments>8</experiments>
</comment>
<comment type="subcellular location">
    <subcellularLocation>
        <location>Nucleus</location>
    </subcellularLocation>
    <text>Colocalizes with spliceosome components.</text>
</comment>
<comment type="alternative products">
    <event type="alternative splicing"/>
    <isoform>
        <id>Q05519-1</id>
        <name>1</name>
        <sequence type="displayed"/>
    </isoform>
    <isoform>
        <id>Q05519-2</id>
        <name>2</name>
        <sequence type="described" ref="VSP_043376"/>
    </isoform>
</comment>
<comment type="similarity">
    <text evidence="5">Belongs to the splicing factor SR family.</text>
</comment>
<sequence>MSNTTVVPSTAGPGPSGGPGGGGGGGGGGGGTEVIQVTNVSPSASSEQMRTLFGFLGKIDELRLFPPDDSPLPVSSRVCFVKFHDPDSAVVAQHLTNTVFVDRALIVVPYAEGVIPDEAKALSLLAPANAVAGLLPGGGLLPTPNPLTQIGAVPLAALGAPTLDPALAALGLPGANLNSQSLAADQLLKLMSTVDPKLNHVAAGLVSPSLKSDTSSKEIEEAMKRVREAQSLISAAIEPDKKEEKRRHSRSRSRSRRRRTPSSSRHRRSRSRSRRRSHSKSRSRRRSKSPRRRRSHSRERGRRSRSTSKTRDKKKEDKEKKRSKTPPKSYSTARRSRSASRERRRRRSRSGTRSPKKPRSPKRKLSRSPSPRRHKKEKKKDKDKERSRDERERSTSKKKKSKDKEKDRERKSESDKDVKQVTRDYDEEEQGYDSEKEKKEEKKPIETGSPKTKECSVEKGTGDSLRESKVNGDDHHEEDMDMSD</sequence>
<feature type="initiator methionine" description="Removed" evidence="8 12">
    <location>
        <position position="1"/>
    </location>
</feature>
<feature type="chain" id="PRO_0000081939" description="Serine/arginine-rich splicing factor 11">
    <location>
        <begin position="2"/>
        <end position="484"/>
    </location>
</feature>
<feature type="domain" description="RRM" evidence="1">
    <location>
        <begin position="33"/>
        <end position="113"/>
    </location>
</feature>
<feature type="repeat" description="1">
    <location>
        <begin position="247"/>
        <end position="255"/>
    </location>
</feature>
<feature type="repeat" description="2">
    <location>
        <begin position="258"/>
        <end position="265"/>
    </location>
</feature>
<feature type="repeat" description="3">
    <location>
        <begin position="267"/>
        <end position="274"/>
    </location>
</feature>
<feature type="repeat" description="4">
    <location>
        <begin position="275"/>
        <end position="282"/>
    </location>
</feature>
<feature type="repeat" description="5">
    <location>
        <begin position="285"/>
        <end position="292"/>
    </location>
</feature>
<feature type="repeat" description="6">
    <location>
        <begin position="293"/>
        <end position="300"/>
    </location>
</feature>
<feature type="repeat" description="7">
    <location>
        <begin position="302"/>
        <end position="309"/>
    </location>
</feature>
<feature type="repeat" description="8">
    <location>
        <begin position="321"/>
        <end position="328"/>
    </location>
</feature>
<feature type="repeat" description="9">
    <location>
        <begin position="334"/>
        <end position="341"/>
    </location>
</feature>
<feature type="repeat" description="10">
    <location>
        <begin position="346"/>
        <end position="353"/>
    </location>
</feature>
<feature type="region of interest" description="Disordered" evidence="2">
    <location>
        <begin position="1"/>
        <end position="33"/>
    </location>
</feature>
<feature type="region of interest" description="Disordered" evidence="2">
    <location>
        <begin position="233"/>
        <end position="484"/>
    </location>
</feature>
<feature type="region of interest" description="10 X 8 AA approximate repeats of R-R-S-R-S-R-S-R">
    <location>
        <begin position="247"/>
        <end position="353"/>
    </location>
</feature>
<feature type="compositionally biased region" description="Gly residues" evidence="2">
    <location>
        <begin position="14"/>
        <end position="32"/>
    </location>
</feature>
<feature type="compositionally biased region" description="Basic residues" evidence="2">
    <location>
        <begin position="244"/>
        <end position="308"/>
    </location>
</feature>
<feature type="compositionally biased region" description="Basic and acidic residues" evidence="2">
    <location>
        <begin position="309"/>
        <end position="320"/>
    </location>
</feature>
<feature type="compositionally biased region" description="Basic residues" evidence="2">
    <location>
        <begin position="334"/>
        <end position="379"/>
    </location>
</feature>
<feature type="compositionally biased region" description="Basic and acidic residues" evidence="2">
    <location>
        <begin position="380"/>
        <end position="395"/>
    </location>
</feature>
<feature type="compositionally biased region" description="Basic and acidic residues" evidence="2">
    <location>
        <begin position="402"/>
        <end position="424"/>
    </location>
</feature>
<feature type="compositionally biased region" description="Basic and acidic residues" evidence="2">
    <location>
        <begin position="433"/>
        <end position="478"/>
    </location>
</feature>
<feature type="modified residue" description="N-acetylserine" evidence="8 12">
    <location>
        <position position="2"/>
    </location>
</feature>
<feature type="modified residue" description="Phosphoserine" evidence="7 9 10 11 13 14">
    <location>
        <position position="207"/>
    </location>
</feature>
<feature type="modified residue" description="Phosphoserine" evidence="13">
    <location>
        <position position="212"/>
    </location>
</feature>
<feature type="modified residue" description="Phosphoserine" evidence="13">
    <location>
        <position position="323"/>
    </location>
</feature>
<feature type="modified residue" description="Phosphothreonine" evidence="13">
    <location>
        <position position="325"/>
    </location>
</feature>
<feature type="modified residue" description="Phosphoserine" evidence="10">
    <location>
        <position position="414"/>
    </location>
</feature>
<feature type="modified residue" description="Phosphoserine" evidence="7 10 11 13 14">
    <location>
        <position position="434"/>
    </location>
</feature>
<feature type="modified residue" description="Phosphothreonine" evidence="10 11">
    <location>
        <position position="447"/>
    </location>
</feature>
<feature type="modified residue" description="Phosphoserine" evidence="10 11 14">
    <location>
        <position position="449"/>
    </location>
</feature>
<feature type="modified residue" description="Phosphoserine" evidence="13">
    <location>
        <position position="456"/>
    </location>
</feature>
<feature type="modified residue" description="Phosphoserine" evidence="10">
    <location>
        <position position="464"/>
    </location>
</feature>
<feature type="modified residue" description="Phosphoserine" evidence="6 9 10 11 13">
    <location>
        <position position="483"/>
    </location>
</feature>
<feature type="cross-link" description="Glycyl lysine isopeptide (Lys-Gly) (interchain with G-Cter in SUMO2)" evidence="15">
    <location>
        <position position="197"/>
    </location>
</feature>
<feature type="cross-link" description="Glycyl lysine isopeptide (Lys-Gly) (interchain with G-Cter in SUMO2)" evidence="15">
    <location>
        <position position="211"/>
    </location>
</feature>
<feature type="splice variant" id="VSP_043376" description="In isoform 2." evidence="4">
    <location>
        <position position="420"/>
    </location>
</feature>